<name>YIDD_ACICJ</name>
<protein>
    <recommendedName>
        <fullName evidence="1">Putative membrane protein insertion efficiency factor</fullName>
    </recommendedName>
</protein>
<keyword id="KW-0997">Cell inner membrane</keyword>
<keyword id="KW-1003">Cell membrane</keyword>
<keyword id="KW-0472">Membrane</keyword>
<keyword id="KW-1185">Reference proteome</keyword>
<comment type="function">
    <text evidence="1">Could be involved in insertion of integral membrane proteins into the membrane.</text>
</comment>
<comment type="subcellular location">
    <subcellularLocation>
        <location evidence="1">Cell inner membrane</location>
        <topology evidence="1">Peripheral membrane protein</topology>
        <orientation evidence="1">Cytoplasmic side</orientation>
    </subcellularLocation>
</comment>
<comment type="similarity">
    <text evidence="1">Belongs to the UPF0161 family.</text>
</comment>
<gene>
    <name type="ordered locus">Acry_2140</name>
</gene>
<sequence>MNTATKLLRGGVRAYQLTLSSVLGGQCRFYPSCSAYAMEALAVHGALHGSALAARRILRCHPWNPGGVDPVPPAHHHDEMKQNG</sequence>
<accession>A5G0F7</accession>
<proteinExistence type="inferred from homology"/>
<reference key="1">
    <citation type="submission" date="2007-05" db="EMBL/GenBank/DDBJ databases">
        <title>Complete sequence of chromosome of Acidiphilium cryptum JF-5.</title>
        <authorList>
            <consortium name="US DOE Joint Genome Institute"/>
            <person name="Copeland A."/>
            <person name="Lucas S."/>
            <person name="Lapidus A."/>
            <person name="Barry K."/>
            <person name="Detter J.C."/>
            <person name="Glavina del Rio T."/>
            <person name="Hammon N."/>
            <person name="Israni S."/>
            <person name="Dalin E."/>
            <person name="Tice H."/>
            <person name="Pitluck S."/>
            <person name="Sims D."/>
            <person name="Brettin T."/>
            <person name="Bruce D."/>
            <person name="Han C."/>
            <person name="Schmutz J."/>
            <person name="Larimer F."/>
            <person name="Land M."/>
            <person name="Hauser L."/>
            <person name="Kyrpides N."/>
            <person name="Kim E."/>
            <person name="Magnuson T."/>
            <person name="Richardson P."/>
        </authorList>
    </citation>
    <scope>NUCLEOTIDE SEQUENCE [LARGE SCALE GENOMIC DNA]</scope>
    <source>
        <strain>JF-5</strain>
    </source>
</reference>
<feature type="chain" id="PRO_1000013060" description="Putative membrane protein insertion efficiency factor">
    <location>
        <begin position="1"/>
        <end position="84"/>
    </location>
</feature>
<evidence type="ECO:0000255" key="1">
    <source>
        <dbReference type="HAMAP-Rule" id="MF_00386"/>
    </source>
</evidence>
<dbReference type="EMBL" id="CP000697">
    <property type="protein sequence ID" value="ABQ31339.1"/>
    <property type="molecule type" value="Genomic_DNA"/>
</dbReference>
<dbReference type="STRING" id="349163.Acry_2140"/>
<dbReference type="KEGG" id="acr:Acry_2140"/>
<dbReference type="eggNOG" id="COG0759">
    <property type="taxonomic scope" value="Bacteria"/>
</dbReference>
<dbReference type="HOGENOM" id="CLU_144811_5_2_5"/>
<dbReference type="Proteomes" id="UP000000245">
    <property type="component" value="Chromosome"/>
</dbReference>
<dbReference type="GO" id="GO:0005886">
    <property type="term" value="C:plasma membrane"/>
    <property type="evidence" value="ECO:0007669"/>
    <property type="project" value="UniProtKB-SubCell"/>
</dbReference>
<dbReference type="HAMAP" id="MF_00386">
    <property type="entry name" value="UPF0161_YidD"/>
    <property type="match status" value="1"/>
</dbReference>
<dbReference type="InterPro" id="IPR002696">
    <property type="entry name" value="Membr_insert_effic_factor_YidD"/>
</dbReference>
<dbReference type="NCBIfam" id="TIGR00278">
    <property type="entry name" value="membrane protein insertion efficiency factor YidD"/>
    <property type="match status" value="1"/>
</dbReference>
<dbReference type="PANTHER" id="PTHR33383">
    <property type="entry name" value="MEMBRANE PROTEIN INSERTION EFFICIENCY FACTOR-RELATED"/>
    <property type="match status" value="1"/>
</dbReference>
<dbReference type="PANTHER" id="PTHR33383:SF1">
    <property type="entry name" value="MEMBRANE PROTEIN INSERTION EFFICIENCY FACTOR-RELATED"/>
    <property type="match status" value="1"/>
</dbReference>
<dbReference type="Pfam" id="PF01809">
    <property type="entry name" value="YidD"/>
    <property type="match status" value="1"/>
</dbReference>
<dbReference type="SMART" id="SM01234">
    <property type="entry name" value="Haemolytic"/>
    <property type="match status" value="1"/>
</dbReference>
<organism>
    <name type="scientific">Acidiphilium cryptum (strain JF-5)</name>
    <dbReference type="NCBI Taxonomy" id="349163"/>
    <lineage>
        <taxon>Bacteria</taxon>
        <taxon>Pseudomonadati</taxon>
        <taxon>Pseudomonadota</taxon>
        <taxon>Alphaproteobacteria</taxon>
        <taxon>Acetobacterales</taxon>
        <taxon>Acidocellaceae</taxon>
        <taxon>Acidiphilium</taxon>
    </lineage>
</organism>